<organism>
    <name type="scientific">Chlamydia trachomatis serovar L2 (strain ATCC VR-902B / DSM 19102 / 434/Bu)</name>
    <dbReference type="NCBI Taxonomy" id="471472"/>
    <lineage>
        <taxon>Bacteria</taxon>
        <taxon>Pseudomonadati</taxon>
        <taxon>Chlamydiota</taxon>
        <taxon>Chlamydiia</taxon>
        <taxon>Chlamydiales</taxon>
        <taxon>Chlamydiaceae</taxon>
        <taxon>Chlamydia/Chlamydophila group</taxon>
        <taxon>Chlamydia</taxon>
    </lineage>
</organism>
<reference key="1">
    <citation type="journal article" date="2008" name="Genome Res.">
        <title>Chlamydia trachomatis: genome sequence analysis of lymphogranuloma venereum isolates.</title>
        <authorList>
            <person name="Thomson N.R."/>
            <person name="Holden M.T.G."/>
            <person name="Carder C."/>
            <person name="Lennard N."/>
            <person name="Lockey S.J."/>
            <person name="Marsh P."/>
            <person name="Skipp P."/>
            <person name="O'Connor C.D."/>
            <person name="Goodhead I."/>
            <person name="Norbertzcak H."/>
            <person name="Harris B."/>
            <person name="Ormond D."/>
            <person name="Rance R."/>
            <person name="Quail M.A."/>
            <person name="Parkhill J."/>
            <person name="Stephens R.S."/>
            <person name="Clarke I.N."/>
        </authorList>
    </citation>
    <scope>NUCLEOTIDE SEQUENCE [LARGE SCALE GENOMIC DNA]</scope>
    <source>
        <strain>ATCC VR-902B / DSM 19102 / 434/Bu</strain>
    </source>
</reference>
<protein>
    <recommendedName>
        <fullName evidence="1">GTPase Der</fullName>
    </recommendedName>
    <alternativeName>
        <fullName evidence="1">GTP-binding protein EngA</fullName>
    </alternativeName>
</protein>
<keyword id="KW-0342">GTP-binding</keyword>
<keyword id="KW-0547">Nucleotide-binding</keyword>
<keyword id="KW-0677">Repeat</keyword>
<keyword id="KW-0690">Ribosome biogenesis</keyword>
<name>DER_CHLT2</name>
<dbReference type="EMBL" id="AM884176">
    <property type="protein sequence ID" value="CAP03516.1"/>
    <property type="molecule type" value="Genomic_DNA"/>
</dbReference>
<dbReference type="RefSeq" id="WP_009873307.1">
    <property type="nucleotide sequence ID" value="NC_010287.1"/>
</dbReference>
<dbReference type="RefSeq" id="YP_001654163.1">
    <property type="nucleotide sequence ID" value="NC_010287.1"/>
</dbReference>
<dbReference type="SMR" id="B0B8S9"/>
<dbReference type="KEGG" id="ctb:CTL0072"/>
<dbReference type="PATRIC" id="fig|471472.4.peg.77"/>
<dbReference type="HOGENOM" id="CLU_016077_6_2_0"/>
<dbReference type="Proteomes" id="UP001154402">
    <property type="component" value="Chromosome"/>
</dbReference>
<dbReference type="GO" id="GO:0005525">
    <property type="term" value="F:GTP binding"/>
    <property type="evidence" value="ECO:0007669"/>
    <property type="project" value="UniProtKB-UniRule"/>
</dbReference>
<dbReference type="GO" id="GO:0043022">
    <property type="term" value="F:ribosome binding"/>
    <property type="evidence" value="ECO:0007669"/>
    <property type="project" value="TreeGrafter"/>
</dbReference>
<dbReference type="GO" id="GO:0042254">
    <property type="term" value="P:ribosome biogenesis"/>
    <property type="evidence" value="ECO:0007669"/>
    <property type="project" value="UniProtKB-KW"/>
</dbReference>
<dbReference type="CDD" id="cd01894">
    <property type="entry name" value="EngA1"/>
    <property type="match status" value="1"/>
</dbReference>
<dbReference type="CDD" id="cd01895">
    <property type="entry name" value="EngA2"/>
    <property type="match status" value="1"/>
</dbReference>
<dbReference type="FunFam" id="3.40.50.300:FF:000040">
    <property type="entry name" value="GTPase Der"/>
    <property type="match status" value="1"/>
</dbReference>
<dbReference type="Gene3D" id="3.30.300.20">
    <property type="match status" value="1"/>
</dbReference>
<dbReference type="Gene3D" id="3.40.50.300">
    <property type="entry name" value="P-loop containing nucleotide triphosphate hydrolases"/>
    <property type="match status" value="2"/>
</dbReference>
<dbReference type="HAMAP" id="MF_00195">
    <property type="entry name" value="GTPase_Der"/>
    <property type="match status" value="1"/>
</dbReference>
<dbReference type="InterPro" id="IPR031166">
    <property type="entry name" value="G_ENGA"/>
</dbReference>
<dbReference type="InterPro" id="IPR006073">
    <property type="entry name" value="GTP-bd"/>
</dbReference>
<dbReference type="InterPro" id="IPR016484">
    <property type="entry name" value="GTPase_Der"/>
</dbReference>
<dbReference type="InterPro" id="IPR032859">
    <property type="entry name" value="KH_dom-like"/>
</dbReference>
<dbReference type="InterPro" id="IPR015946">
    <property type="entry name" value="KH_dom-like_a/b"/>
</dbReference>
<dbReference type="InterPro" id="IPR027417">
    <property type="entry name" value="P-loop_NTPase"/>
</dbReference>
<dbReference type="InterPro" id="IPR005225">
    <property type="entry name" value="Small_GTP-bd"/>
</dbReference>
<dbReference type="NCBIfam" id="TIGR03594">
    <property type="entry name" value="GTPase_EngA"/>
    <property type="match status" value="1"/>
</dbReference>
<dbReference type="NCBIfam" id="TIGR00231">
    <property type="entry name" value="small_GTP"/>
    <property type="match status" value="2"/>
</dbReference>
<dbReference type="PANTHER" id="PTHR43834">
    <property type="entry name" value="GTPASE DER"/>
    <property type="match status" value="1"/>
</dbReference>
<dbReference type="PANTHER" id="PTHR43834:SF6">
    <property type="entry name" value="GTPASE DER"/>
    <property type="match status" value="1"/>
</dbReference>
<dbReference type="Pfam" id="PF14714">
    <property type="entry name" value="KH_dom-like"/>
    <property type="match status" value="1"/>
</dbReference>
<dbReference type="Pfam" id="PF01926">
    <property type="entry name" value="MMR_HSR1"/>
    <property type="match status" value="2"/>
</dbReference>
<dbReference type="PIRSF" id="PIRSF006485">
    <property type="entry name" value="GTP-binding_EngA"/>
    <property type="match status" value="1"/>
</dbReference>
<dbReference type="PRINTS" id="PR00326">
    <property type="entry name" value="GTP1OBG"/>
</dbReference>
<dbReference type="SUPFAM" id="SSF52540">
    <property type="entry name" value="P-loop containing nucleoside triphosphate hydrolases"/>
    <property type="match status" value="1"/>
</dbReference>
<dbReference type="SUPFAM" id="SSF82653">
    <property type="entry name" value="Probable GTPase Der, C-terminal domain"/>
    <property type="match status" value="1"/>
</dbReference>
<dbReference type="PROSITE" id="PS51712">
    <property type="entry name" value="G_ENGA"/>
    <property type="match status" value="2"/>
</dbReference>
<evidence type="ECO:0000255" key="1">
    <source>
        <dbReference type="HAMAP-Rule" id="MF_00195"/>
    </source>
</evidence>
<comment type="function">
    <text evidence="1">GTPase that plays an essential role in the late steps of ribosome biogenesis.</text>
</comment>
<comment type="subunit">
    <text evidence="1">Associates with the 50S ribosomal subunit.</text>
</comment>
<comment type="similarity">
    <text evidence="1">Belongs to the TRAFAC class TrmE-Era-EngA-EngB-Septin-like GTPase superfamily. EngA (Der) GTPase family.</text>
</comment>
<feature type="chain" id="PRO_1000099104" description="GTPase Der">
    <location>
        <begin position="1"/>
        <end position="490"/>
    </location>
</feature>
<feature type="domain" description="EngA-type G 1">
    <location>
        <begin position="1"/>
        <end position="165"/>
    </location>
</feature>
<feature type="domain" description="EngA-type G 2">
    <location>
        <begin position="227"/>
        <end position="400"/>
    </location>
</feature>
<feature type="domain" description="KH-like" evidence="1">
    <location>
        <begin position="401"/>
        <end position="485"/>
    </location>
</feature>
<feature type="binding site" evidence="1">
    <location>
        <begin position="7"/>
        <end position="14"/>
    </location>
    <ligand>
        <name>GTP</name>
        <dbReference type="ChEBI" id="CHEBI:37565"/>
        <label>1</label>
    </ligand>
</feature>
<feature type="binding site" evidence="1">
    <location>
        <begin position="54"/>
        <end position="58"/>
    </location>
    <ligand>
        <name>GTP</name>
        <dbReference type="ChEBI" id="CHEBI:37565"/>
        <label>1</label>
    </ligand>
</feature>
<feature type="binding site" evidence="1">
    <location>
        <begin position="117"/>
        <end position="120"/>
    </location>
    <ligand>
        <name>GTP</name>
        <dbReference type="ChEBI" id="CHEBI:37565"/>
        <label>1</label>
    </ligand>
</feature>
<feature type="binding site" evidence="1">
    <location>
        <begin position="233"/>
        <end position="240"/>
    </location>
    <ligand>
        <name>GTP</name>
        <dbReference type="ChEBI" id="CHEBI:37565"/>
        <label>2</label>
    </ligand>
</feature>
<feature type="binding site" evidence="1">
    <location>
        <begin position="280"/>
        <end position="284"/>
    </location>
    <ligand>
        <name>GTP</name>
        <dbReference type="ChEBI" id="CHEBI:37565"/>
        <label>2</label>
    </ligand>
</feature>
<feature type="binding site" evidence="1">
    <location>
        <begin position="345"/>
        <end position="348"/>
    </location>
    <ligand>
        <name>GTP</name>
        <dbReference type="ChEBI" id="CHEBI:37565"/>
        <label>2</label>
    </ligand>
</feature>
<sequence>MRIAILGRPNVGKSSLFNRLCRRSLAIVNSQEGTTRDRLYGEIRAWDSIIHVIDTGGVDQESTDRFQKQIHQQALAAAEEASVLLLVVDIRCGITKQDEELAKRLLPLKKPLILVMNKADSQQDLQRIHEFYGLGISDMIATSASHDKHIDLLLERIRQIAQIPVPSVEEQDVVQEDELPSEEAAISLHAFADETLFENESLSQEEASFLEELVAQTATPAPVDRPLKVALIGHPNVGKSSIINALLKEERCITDNSPGTTRDNIDVAYTHNNKEYVFIDTAGLRKTKSIKNSVEWMSSSRTEKAISRTDICLLVIDATQQLSYQDKRILSMIARYKKPHVILVNKWDLMFGVRMEHYVQDLRKMDPYIGQAHILCISAKQRRNLLQIFSAIDDIYTIATTKLSTSLVNKVLASAMQRHHPQVINGKRLRIYYAIHKTTTPFTFLLFINSNSLLTKPYELYLKNTLKAAFNLYRVPFDLEYKAKPARKSN</sequence>
<proteinExistence type="inferred from homology"/>
<gene>
    <name evidence="1" type="primary">der</name>
    <name type="synonym">engA</name>
    <name type="ordered locus">CTL0072</name>
</gene>
<accession>B0B8S9</accession>